<name>MRAY_PSYA2</name>
<protein>
    <recommendedName>
        <fullName evidence="1">Phospho-N-acetylmuramoyl-pentapeptide-transferase</fullName>
        <ecNumber evidence="1">2.7.8.13</ecNumber>
    </recommendedName>
    <alternativeName>
        <fullName evidence="1">UDP-MurNAc-pentapeptide phosphotransferase</fullName>
    </alternativeName>
</protein>
<comment type="function">
    <text evidence="1">Catalyzes the initial step of the lipid cycle reactions in the biosynthesis of the cell wall peptidoglycan: transfers peptidoglycan precursor phospho-MurNAc-pentapeptide from UDP-MurNAc-pentapeptide onto the lipid carrier undecaprenyl phosphate, yielding undecaprenyl-pyrophosphoryl-MurNAc-pentapeptide, known as lipid I.</text>
</comment>
<comment type="catalytic activity">
    <reaction evidence="1">
        <text>UDP-N-acetyl-alpha-D-muramoyl-L-alanyl-gamma-D-glutamyl-meso-2,6-diaminopimeloyl-D-alanyl-D-alanine + di-trans,octa-cis-undecaprenyl phosphate = di-trans,octa-cis-undecaprenyl diphospho-N-acetyl-alpha-D-muramoyl-L-alanyl-D-glutamyl-meso-2,6-diaminopimeloyl-D-alanyl-D-alanine + UMP</text>
        <dbReference type="Rhea" id="RHEA:28386"/>
        <dbReference type="ChEBI" id="CHEBI:57865"/>
        <dbReference type="ChEBI" id="CHEBI:60392"/>
        <dbReference type="ChEBI" id="CHEBI:61386"/>
        <dbReference type="ChEBI" id="CHEBI:61387"/>
        <dbReference type="EC" id="2.7.8.13"/>
    </reaction>
</comment>
<comment type="cofactor">
    <cofactor evidence="1">
        <name>Mg(2+)</name>
        <dbReference type="ChEBI" id="CHEBI:18420"/>
    </cofactor>
</comment>
<comment type="pathway">
    <text evidence="1">Cell wall biogenesis; peptidoglycan biosynthesis.</text>
</comment>
<comment type="subcellular location">
    <subcellularLocation>
        <location evidence="1">Cell inner membrane</location>
        <topology evidence="1">Multi-pass membrane protein</topology>
    </subcellularLocation>
</comment>
<comment type="similarity">
    <text evidence="1">Belongs to the glycosyltransferase 4 family. MraY subfamily.</text>
</comment>
<evidence type="ECO:0000255" key="1">
    <source>
        <dbReference type="HAMAP-Rule" id="MF_00038"/>
    </source>
</evidence>
<gene>
    <name evidence="1" type="primary">mraY</name>
    <name type="ordered locus">Psyc_2051</name>
</gene>
<reference key="1">
    <citation type="journal article" date="2010" name="Appl. Environ. Microbiol.">
        <title>The genome sequence of Psychrobacter arcticus 273-4, a psychroactive Siberian permafrost bacterium, reveals mechanisms for adaptation to low-temperature growth.</title>
        <authorList>
            <person name="Ayala-del-Rio H.L."/>
            <person name="Chain P.S."/>
            <person name="Grzymski J.J."/>
            <person name="Ponder M.A."/>
            <person name="Ivanova N."/>
            <person name="Bergholz P.W."/>
            <person name="Di Bartolo G."/>
            <person name="Hauser L."/>
            <person name="Land M."/>
            <person name="Bakermans C."/>
            <person name="Rodrigues D."/>
            <person name="Klappenbach J."/>
            <person name="Zarka D."/>
            <person name="Larimer F."/>
            <person name="Richardson P."/>
            <person name="Murray A."/>
            <person name="Thomashow M."/>
            <person name="Tiedje J.M."/>
        </authorList>
    </citation>
    <scope>NUCLEOTIDE SEQUENCE [LARGE SCALE GENOMIC DNA]</scope>
    <source>
        <strain>DSM 17307 / VKM B-2377 / 273-4</strain>
    </source>
</reference>
<keyword id="KW-0131">Cell cycle</keyword>
<keyword id="KW-0132">Cell division</keyword>
<keyword id="KW-0997">Cell inner membrane</keyword>
<keyword id="KW-1003">Cell membrane</keyword>
<keyword id="KW-0133">Cell shape</keyword>
<keyword id="KW-0961">Cell wall biogenesis/degradation</keyword>
<keyword id="KW-0460">Magnesium</keyword>
<keyword id="KW-0472">Membrane</keyword>
<keyword id="KW-0479">Metal-binding</keyword>
<keyword id="KW-0573">Peptidoglycan synthesis</keyword>
<keyword id="KW-1185">Reference proteome</keyword>
<keyword id="KW-0808">Transferase</keyword>
<keyword id="KW-0812">Transmembrane</keyword>
<keyword id="KW-1133">Transmembrane helix</keyword>
<proteinExistence type="inferred from homology"/>
<accession>Q4FQ10</accession>
<dbReference type="EC" id="2.7.8.13" evidence="1"/>
<dbReference type="EMBL" id="CP000082">
    <property type="protein sequence ID" value="AAZ19898.1"/>
    <property type="molecule type" value="Genomic_DNA"/>
</dbReference>
<dbReference type="RefSeq" id="WP_011281305.1">
    <property type="nucleotide sequence ID" value="NC_007204.1"/>
</dbReference>
<dbReference type="SMR" id="Q4FQ10"/>
<dbReference type="STRING" id="259536.Psyc_2051"/>
<dbReference type="KEGG" id="par:Psyc_2051"/>
<dbReference type="eggNOG" id="COG0472">
    <property type="taxonomic scope" value="Bacteria"/>
</dbReference>
<dbReference type="HOGENOM" id="CLU_023982_0_0_6"/>
<dbReference type="OrthoDB" id="9805475at2"/>
<dbReference type="UniPathway" id="UPA00219"/>
<dbReference type="Proteomes" id="UP000000546">
    <property type="component" value="Chromosome"/>
</dbReference>
<dbReference type="GO" id="GO:0005886">
    <property type="term" value="C:plasma membrane"/>
    <property type="evidence" value="ECO:0007669"/>
    <property type="project" value="UniProtKB-SubCell"/>
</dbReference>
<dbReference type="GO" id="GO:0046872">
    <property type="term" value="F:metal ion binding"/>
    <property type="evidence" value="ECO:0007669"/>
    <property type="project" value="UniProtKB-KW"/>
</dbReference>
<dbReference type="GO" id="GO:0008963">
    <property type="term" value="F:phospho-N-acetylmuramoyl-pentapeptide-transferase activity"/>
    <property type="evidence" value="ECO:0007669"/>
    <property type="project" value="UniProtKB-UniRule"/>
</dbReference>
<dbReference type="GO" id="GO:0051992">
    <property type="term" value="F:UDP-N-acetylmuramoyl-L-alanyl-D-glutamyl-meso-2,6-diaminopimelyl-D-alanyl-D-alanine:undecaprenyl-phosphate transferase activity"/>
    <property type="evidence" value="ECO:0007669"/>
    <property type="project" value="RHEA"/>
</dbReference>
<dbReference type="GO" id="GO:0051301">
    <property type="term" value="P:cell division"/>
    <property type="evidence" value="ECO:0007669"/>
    <property type="project" value="UniProtKB-KW"/>
</dbReference>
<dbReference type="GO" id="GO:0071555">
    <property type="term" value="P:cell wall organization"/>
    <property type="evidence" value="ECO:0007669"/>
    <property type="project" value="UniProtKB-KW"/>
</dbReference>
<dbReference type="GO" id="GO:0009252">
    <property type="term" value="P:peptidoglycan biosynthetic process"/>
    <property type="evidence" value="ECO:0007669"/>
    <property type="project" value="UniProtKB-UniRule"/>
</dbReference>
<dbReference type="GO" id="GO:0008360">
    <property type="term" value="P:regulation of cell shape"/>
    <property type="evidence" value="ECO:0007669"/>
    <property type="project" value="UniProtKB-KW"/>
</dbReference>
<dbReference type="CDD" id="cd06852">
    <property type="entry name" value="GT_MraY"/>
    <property type="match status" value="1"/>
</dbReference>
<dbReference type="HAMAP" id="MF_00038">
    <property type="entry name" value="MraY"/>
    <property type="match status" value="1"/>
</dbReference>
<dbReference type="InterPro" id="IPR000715">
    <property type="entry name" value="Glycosyl_transferase_4"/>
</dbReference>
<dbReference type="InterPro" id="IPR003524">
    <property type="entry name" value="PNAcMuramoyl-5peptid_Trfase"/>
</dbReference>
<dbReference type="InterPro" id="IPR018480">
    <property type="entry name" value="PNAcMuramoyl-5peptid_Trfase_CS"/>
</dbReference>
<dbReference type="NCBIfam" id="TIGR00445">
    <property type="entry name" value="mraY"/>
    <property type="match status" value="1"/>
</dbReference>
<dbReference type="PANTHER" id="PTHR22926">
    <property type="entry name" value="PHOSPHO-N-ACETYLMURAMOYL-PENTAPEPTIDE-TRANSFERASE"/>
    <property type="match status" value="1"/>
</dbReference>
<dbReference type="PANTHER" id="PTHR22926:SF5">
    <property type="entry name" value="PHOSPHO-N-ACETYLMURAMOYL-PENTAPEPTIDE-TRANSFERASE HOMOLOG"/>
    <property type="match status" value="1"/>
</dbReference>
<dbReference type="Pfam" id="PF00953">
    <property type="entry name" value="Glycos_transf_4"/>
    <property type="match status" value="1"/>
</dbReference>
<dbReference type="Pfam" id="PF10555">
    <property type="entry name" value="MraY_sig1"/>
    <property type="match status" value="1"/>
</dbReference>
<dbReference type="PROSITE" id="PS01347">
    <property type="entry name" value="MRAY_1"/>
    <property type="match status" value="1"/>
</dbReference>
<dbReference type="PROSITE" id="PS01348">
    <property type="entry name" value="MRAY_2"/>
    <property type="match status" value="1"/>
</dbReference>
<organism>
    <name type="scientific">Psychrobacter arcticus (strain DSM 17307 / VKM B-2377 / 273-4)</name>
    <dbReference type="NCBI Taxonomy" id="259536"/>
    <lineage>
        <taxon>Bacteria</taxon>
        <taxon>Pseudomonadati</taxon>
        <taxon>Pseudomonadota</taxon>
        <taxon>Gammaproteobacteria</taxon>
        <taxon>Moraxellales</taxon>
        <taxon>Moraxellaceae</taxon>
        <taxon>Psychrobacter</taxon>
    </lineage>
</organism>
<sequence length="372" mass="41047">MLVWLFGWLGQYYAPFSAVSSLTLRALLAVITALAFSMIFGSRVIRRLRALKYGQAIRNDGPQSHLVKTGTPTMGGVLILSAIGVSTLLWARLNNPYVWILLIVMIIFGAVGWADDWLKIKYKNPKGLIARKKYFWLSMGALFVGISLYYIATLQPNVVTTREMQDLLLPIFKDWMIPFSAVPFGIGFIIFTYFVINGASNAVNLTDGLDGLAILPVVLVAAGLGAMAYVSGDVRFADYLHVPYIAYNSEVIIVCGAMIGAGLGFLWFNAHPAQVFMGDVGALSLGAMLGTIAVMTRQEIAFAIMGGLFVAEALSVMLQVGSYKLRKKRVFRMAPLHHHFEEIGWKETQVVARFWIIAIILVILGLMTLKLR</sequence>
<feature type="chain" id="PRO_0000235473" description="Phospho-N-acetylmuramoyl-pentapeptide-transferase">
    <location>
        <begin position="1"/>
        <end position="372"/>
    </location>
</feature>
<feature type="transmembrane region" description="Helical" evidence="1">
    <location>
        <begin position="21"/>
        <end position="41"/>
    </location>
</feature>
<feature type="transmembrane region" description="Helical" evidence="1">
    <location>
        <begin position="71"/>
        <end position="91"/>
    </location>
</feature>
<feature type="transmembrane region" description="Helical" evidence="1">
    <location>
        <begin position="98"/>
        <end position="118"/>
    </location>
</feature>
<feature type="transmembrane region" description="Helical" evidence="1">
    <location>
        <begin position="134"/>
        <end position="154"/>
    </location>
</feature>
<feature type="transmembrane region" description="Helical" evidence="1">
    <location>
        <begin position="176"/>
        <end position="196"/>
    </location>
</feature>
<feature type="transmembrane region" description="Helical" evidence="1">
    <location>
        <begin position="211"/>
        <end position="231"/>
    </location>
</feature>
<feature type="transmembrane region" description="Helical" evidence="1">
    <location>
        <begin position="251"/>
        <end position="271"/>
    </location>
</feature>
<feature type="transmembrane region" description="Helical" evidence="1">
    <location>
        <begin position="275"/>
        <end position="295"/>
    </location>
</feature>
<feature type="transmembrane region" description="Helical" evidence="1">
    <location>
        <begin position="300"/>
        <end position="320"/>
    </location>
</feature>
<feature type="transmembrane region" description="Helical" evidence="1">
    <location>
        <begin position="349"/>
        <end position="369"/>
    </location>
</feature>